<feature type="chain" id="PRO_1000129398" description="D-alanyl carrier protein">
    <location>
        <begin position="1"/>
        <end position="79"/>
    </location>
</feature>
<feature type="domain" description="Carrier" evidence="1">
    <location>
        <begin position="2"/>
        <end position="79"/>
    </location>
</feature>
<feature type="modified residue" description="O-(pantetheine 4'-phosphoryl)serine" evidence="1">
    <location>
        <position position="37"/>
    </location>
</feature>
<organism>
    <name type="scientific">Bacillus mycoides (strain KBAB4)</name>
    <name type="common">Bacillus weihenstephanensis</name>
    <dbReference type="NCBI Taxonomy" id="315730"/>
    <lineage>
        <taxon>Bacteria</taxon>
        <taxon>Bacillati</taxon>
        <taxon>Bacillota</taxon>
        <taxon>Bacilli</taxon>
        <taxon>Bacillales</taxon>
        <taxon>Bacillaceae</taxon>
        <taxon>Bacillus</taxon>
        <taxon>Bacillus cereus group</taxon>
    </lineage>
</organism>
<dbReference type="EMBL" id="CP000903">
    <property type="protein sequence ID" value="ABY42539.1"/>
    <property type="molecule type" value="Genomic_DNA"/>
</dbReference>
<dbReference type="RefSeq" id="WP_002011622.1">
    <property type="nucleotide sequence ID" value="NZ_CAKMRX030000133.1"/>
</dbReference>
<dbReference type="SMR" id="A9VKV4"/>
<dbReference type="GeneID" id="66263580"/>
<dbReference type="KEGG" id="bwe:BcerKBAB4_1292"/>
<dbReference type="eggNOG" id="COG0236">
    <property type="taxonomic scope" value="Bacteria"/>
</dbReference>
<dbReference type="HOGENOM" id="CLU_108696_19_0_9"/>
<dbReference type="UniPathway" id="UPA00556"/>
<dbReference type="Proteomes" id="UP000002154">
    <property type="component" value="Chromosome"/>
</dbReference>
<dbReference type="GO" id="GO:0005737">
    <property type="term" value="C:cytoplasm"/>
    <property type="evidence" value="ECO:0007669"/>
    <property type="project" value="UniProtKB-SubCell"/>
</dbReference>
<dbReference type="GO" id="GO:0036370">
    <property type="term" value="F:D-alanyl carrier activity"/>
    <property type="evidence" value="ECO:0007669"/>
    <property type="project" value="UniProtKB-UniRule"/>
</dbReference>
<dbReference type="GO" id="GO:0071555">
    <property type="term" value="P:cell wall organization"/>
    <property type="evidence" value="ECO:0007669"/>
    <property type="project" value="UniProtKB-KW"/>
</dbReference>
<dbReference type="GO" id="GO:0070395">
    <property type="term" value="P:lipoteichoic acid biosynthetic process"/>
    <property type="evidence" value="ECO:0007669"/>
    <property type="project" value="UniProtKB-UniRule"/>
</dbReference>
<dbReference type="FunFam" id="1.10.1200.10:FF:000004">
    <property type="entry name" value="D-alanyl carrier protein"/>
    <property type="match status" value="1"/>
</dbReference>
<dbReference type="Gene3D" id="1.10.1200.10">
    <property type="entry name" value="ACP-like"/>
    <property type="match status" value="1"/>
</dbReference>
<dbReference type="HAMAP" id="MF_00565">
    <property type="entry name" value="DltC"/>
    <property type="match status" value="1"/>
</dbReference>
<dbReference type="InterPro" id="IPR036736">
    <property type="entry name" value="ACP-like_sf"/>
</dbReference>
<dbReference type="InterPro" id="IPR003230">
    <property type="entry name" value="DltC"/>
</dbReference>
<dbReference type="InterPro" id="IPR009081">
    <property type="entry name" value="PP-bd_ACP"/>
</dbReference>
<dbReference type="NCBIfam" id="TIGR01688">
    <property type="entry name" value="dltC"/>
    <property type="match status" value="1"/>
</dbReference>
<dbReference type="NCBIfam" id="NF003464">
    <property type="entry name" value="PRK05087.1"/>
    <property type="match status" value="1"/>
</dbReference>
<dbReference type="Pfam" id="PF00550">
    <property type="entry name" value="PP-binding"/>
    <property type="match status" value="1"/>
</dbReference>
<dbReference type="SUPFAM" id="SSF47336">
    <property type="entry name" value="ACP-like"/>
    <property type="match status" value="1"/>
</dbReference>
<dbReference type="PROSITE" id="PS50075">
    <property type="entry name" value="CARRIER"/>
    <property type="match status" value="1"/>
</dbReference>
<protein>
    <recommendedName>
        <fullName evidence="1">D-alanyl carrier protein</fullName>
        <shortName evidence="1">DCP</shortName>
    </recommendedName>
    <alternativeName>
        <fullName evidence="1">D-alanine--poly(phosphoribitol) ligase subunit 2</fullName>
    </alternativeName>
</protein>
<sequence length="79" mass="9276">MAEFKEQVLDILEEVCENDIVKENLDVQLFEEGILDSFAVVSLLVEFQERLEIEVSISDFDRDEWATPNMVIKKLEEIR</sequence>
<comment type="function">
    <text evidence="1">Carrier protein involved in the D-alanylation of lipoteichoic acid (LTA). The loading of thioester-linked D-alanine onto DltC is catalyzed by D-alanine--D-alanyl carrier protein ligase DltA. The DltC-carried D-alanyl group is further transferred to cell membrane phosphatidylglycerol (PG) by forming an ester bond, probably catalyzed by DltD. D-alanylation of LTA plays an important role in modulating the properties of the cell wall in Gram-positive bacteria, influencing the net charge of the cell wall.</text>
</comment>
<comment type="pathway">
    <text evidence="1">Cell wall biogenesis; lipoteichoic acid biosynthesis.</text>
</comment>
<comment type="subcellular location">
    <subcellularLocation>
        <location evidence="1">Cytoplasm</location>
    </subcellularLocation>
</comment>
<comment type="PTM">
    <text evidence="1">4'-phosphopantetheine is transferred from CoA to a specific serine of apo-DCP.</text>
</comment>
<comment type="similarity">
    <text evidence="1">Belongs to the DltC family.</text>
</comment>
<gene>
    <name evidence="1" type="primary">dltC</name>
    <name type="ordered locus">BcerKBAB4_1292</name>
</gene>
<reference key="1">
    <citation type="journal article" date="2008" name="Chem. Biol. Interact.">
        <title>Extending the Bacillus cereus group genomics to putative food-borne pathogens of different toxicity.</title>
        <authorList>
            <person name="Lapidus A."/>
            <person name="Goltsman E."/>
            <person name="Auger S."/>
            <person name="Galleron N."/>
            <person name="Segurens B."/>
            <person name="Dossat C."/>
            <person name="Land M.L."/>
            <person name="Broussolle V."/>
            <person name="Brillard J."/>
            <person name="Guinebretiere M.-H."/>
            <person name="Sanchis V."/>
            <person name="Nguen-the C."/>
            <person name="Lereclus D."/>
            <person name="Richardson P."/>
            <person name="Wincker P."/>
            <person name="Weissenbach J."/>
            <person name="Ehrlich S.D."/>
            <person name="Sorokin A."/>
        </authorList>
    </citation>
    <scope>NUCLEOTIDE SEQUENCE [LARGE SCALE GENOMIC DNA]</scope>
    <source>
        <strain>KBAB4</strain>
    </source>
</reference>
<keyword id="KW-0961">Cell wall biogenesis/degradation</keyword>
<keyword id="KW-0963">Cytoplasm</keyword>
<keyword id="KW-0596">Phosphopantetheine</keyword>
<keyword id="KW-0597">Phosphoprotein</keyword>
<accession>A9VKV4</accession>
<evidence type="ECO:0000255" key="1">
    <source>
        <dbReference type="HAMAP-Rule" id="MF_00565"/>
    </source>
</evidence>
<proteinExistence type="inferred from homology"/>
<name>DLTC_BACMK</name>